<proteinExistence type="inferred from homology"/>
<dbReference type="EMBL" id="CP000880">
    <property type="protein sequence ID" value="ABX24417.1"/>
    <property type="molecule type" value="Genomic_DNA"/>
</dbReference>
<dbReference type="SMR" id="A9MRL9"/>
<dbReference type="STRING" id="41514.SARI_04650"/>
<dbReference type="KEGG" id="ses:SARI_04650"/>
<dbReference type="HOGENOM" id="CLU_047399_0_0_6"/>
<dbReference type="Proteomes" id="UP000002084">
    <property type="component" value="Chromosome"/>
</dbReference>
<dbReference type="GO" id="GO:0005886">
    <property type="term" value="C:plasma membrane"/>
    <property type="evidence" value="ECO:0007669"/>
    <property type="project" value="UniProtKB-SubCell"/>
</dbReference>
<dbReference type="GO" id="GO:0051978">
    <property type="term" value="F:lysophospholipid:sodium symporter activity"/>
    <property type="evidence" value="ECO:0007669"/>
    <property type="project" value="InterPro"/>
</dbReference>
<dbReference type="CDD" id="cd06173">
    <property type="entry name" value="MFS_MefA_like"/>
    <property type="match status" value="1"/>
</dbReference>
<dbReference type="Gene3D" id="1.20.1250.20">
    <property type="entry name" value="MFS general substrate transporter like domains"/>
    <property type="match status" value="1"/>
</dbReference>
<dbReference type="HAMAP" id="MF_01585">
    <property type="entry name" value="MFS_LplT"/>
    <property type="match status" value="1"/>
</dbReference>
<dbReference type="InterPro" id="IPR023727">
    <property type="entry name" value="LysoPLipid__transptr_LplT"/>
</dbReference>
<dbReference type="InterPro" id="IPR011701">
    <property type="entry name" value="MFS"/>
</dbReference>
<dbReference type="InterPro" id="IPR036259">
    <property type="entry name" value="MFS_trans_sf"/>
</dbReference>
<dbReference type="NCBIfam" id="NF008397">
    <property type="entry name" value="PRK11195.1"/>
    <property type="match status" value="1"/>
</dbReference>
<dbReference type="PANTHER" id="PTHR43266">
    <property type="entry name" value="MACROLIDE-EFFLUX PROTEIN"/>
    <property type="match status" value="1"/>
</dbReference>
<dbReference type="PANTHER" id="PTHR43266:SF2">
    <property type="entry name" value="MAJOR FACILITATOR SUPERFAMILY (MFS) PROFILE DOMAIN-CONTAINING PROTEIN"/>
    <property type="match status" value="1"/>
</dbReference>
<dbReference type="Pfam" id="PF07690">
    <property type="entry name" value="MFS_1"/>
    <property type="match status" value="1"/>
</dbReference>
<dbReference type="SUPFAM" id="SSF103473">
    <property type="entry name" value="MFS general substrate transporter"/>
    <property type="match status" value="1"/>
</dbReference>
<feature type="chain" id="PRO_1000087952" description="Lysophospholipid transporter LplT">
    <location>
        <begin position="1"/>
        <end position="398"/>
    </location>
</feature>
<feature type="transmembrane region" description="Helical" evidence="1">
    <location>
        <begin position="19"/>
        <end position="39"/>
    </location>
</feature>
<feature type="transmembrane region" description="Helical" evidence="1">
    <location>
        <begin position="53"/>
        <end position="73"/>
    </location>
</feature>
<feature type="transmembrane region" description="Helical" evidence="1">
    <location>
        <begin position="96"/>
        <end position="116"/>
    </location>
</feature>
<feature type="transmembrane region" description="Helical" evidence="1">
    <location>
        <begin position="139"/>
        <end position="159"/>
    </location>
</feature>
<feature type="transmembrane region" description="Helical" evidence="1">
    <location>
        <begin position="164"/>
        <end position="184"/>
    </location>
</feature>
<feature type="transmembrane region" description="Helical" evidence="1">
    <location>
        <begin position="195"/>
        <end position="213"/>
    </location>
</feature>
<feature type="transmembrane region" description="Helical" evidence="1">
    <location>
        <begin position="227"/>
        <end position="247"/>
    </location>
</feature>
<feature type="transmembrane region" description="Helical" evidence="1">
    <location>
        <begin position="257"/>
        <end position="277"/>
    </location>
</feature>
<feature type="transmembrane region" description="Helical" evidence="1">
    <location>
        <begin position="281"/>
        <end position="301"/>
    </location>
</feature>
<feature type="transmembrane region" description="Helical" evidence="1">
    <location>
        <begin position="304"/>
        <end position="324"/>
    </location>
</feature>
<feature type="transmembrane region" description="Helical" evidence="1">
    <location>
        <begin position="352"/>
        <end position="372"/>
    </location>
</feature>
<feature type="transmembrane region" description="Helical" evidence="1">
    <location>
        <begin position="373"/>
        <end position="393"/>
    </location>
</feature>
<accession>A9MRL9</accession>
<name>LPLT_SALAR</name>
<protein>
    <recommendedName>
        <fullName evidence="1">Lysophospholipid transporter LplT</fullName>
    </recommendedName>
</protein>
<reference key="1">
    <citation type="submission" date="2007-11" db="EMBL/GenBank/DDBJ databases">
        <authorList>
            <consortium name="The Salmonella enterica serovar Arizonae Genome Sequencing Project"/>
            <person name="McClelland M."/>
            <person name="Sanderson E.K."/>
            <person name="Porwollik S."/>
            <person name="Spieth J."/>
            <person name="Clifton W.S."/>
            <person name="Fulton R."/>
            <person name="Chunyan W."/>
            <person name="Wollam A."/>
            <person name="Shah N."/>
            <person name="Pepin K."/>
            <person name="Bhonagiri V."/>
            <person name="Nash W."/>
            <person name="Johnson M."/>
            <person name="Thiruvilangam P."/>
            <person name="Wilson R."/>
        </authorList>
    </citation>
    <scope>NUCLEOTIDE SEQUENCE [LARGE SCALE GENOMIC DNA]</scope>
    <source>
        <strain>ATCC BAA-731 / CDC346-86 / RSK2980</strain>
    </source>
</reference>
<comment type="function">
    <text evidence="1">Catalyzes the facilitated diffusion of 2-acyl-glycero-3-phosphoethanolamine (2-acyl-GPE) into the cell.</text>
</comment>
<comment type="subcellular location">
    <subcellularLocation>
        <location evidence="1">Cell inner membrane</location>
        <topology evidence="1">Multi-pass membrane protein</topology>
    </subcellularLocation>
</comment>
<comment type="similarity">
    <text evidence="1">Belongs to the major facilitator superfamily. LplT (TC 2.A.1.42) family.</text>
</comment>
<organism>
    <name type="scientific">Salmonella arizonae (strain ATCC BAA-731 / CDC346-86 / RSK2980)</name>
    <dbReference type="NCBI Taxonomy" id="41514"/>
    <lineage>
        <taxon>Bacteria</taxon>
        <taxon>Pseudomonadati</taxon>
        <taxon>Pseudomonadota</taxon>
        <taxon>Gammaproteobacteria</taxon>
        <taxon>Enterobacterales</taxon>
        <taxon>Enterobacteriaceae</taxon>
        <taxon>Salmonella</taxon>
    </lineage>
</organism>
<keyword id="KW-0997">Cell inner membrane</keyword>
<keyword id="KW-1003">Cell membrane</keyword>
<keyword id="KW-0445">Lipid transport</keyword>
<keyword id="KW-0472">Membrane</keyword>
<keyword id="KW-1185">Reference proteome</keyword>
<keyword id="KW-0812">Transmembrane</keyword>
<keyword id="KW-1133">Transmembrane helix</keyword>
<keyword id="KW-0813">Transport</keyword>
<sequence>MSESVHTNTSICSKGMLSVIVAQFLSAFGDNALLFATLALLKAQFYPDWSQPVLQMVFVGAYILFAPFVGQIADSFAKGRVMMFANGLKLAGAASICLGVNPFVGYTLVGIGAAAYSPAKYGILGELTTGNKLVKANGLMEASTIAAILLGSVAGGVLADWHVIAALVACTLAYAGAVVANLFIPKLVAARPGQSWQLAAMIRSFFCACVVLWRNGETRFSLVGTGLFWGAGVTLRFLVVLWVPVALGITDNATPTYLNAMVAVGIVVGAGAAAKLVTLETVSRCMPAGILIGVVVAMFSLQHALLPAYALLLLIGILGGFFVVPLNALLQERGKKSVGAGNAIAVQNLGENSTMLLMLGLYSLAVMVGVPAVATGIGFGVLFALAIAALWIWQRRQA</sequence>
<gene>
    <name evidence="1" type="primary">lplT</name>
    <name type="ordered locus">SARI_04650</name>
</gene>
<evidence type="ECO:0000255" key="1">
    <source>
        <dbReference type="HAMAP-Rule" id="MF_01585"/>
    </source>
</evidence>